<name>NAA25_AEDAE</name>
<dbReference type="EMBL" id="CH477293">
    <property type="protein sequence ID" value="EAT44499.1"/>
    <property type="status" value="ALT_SEQ"/>
    <property type="molecule type" value="Genomic_DNA"/>
</dbReference>
<dbReference type="RefSeq" id="XP_001648501.1">
    <property type="nucleotide sequence ID" value="XM_001648451.1"/>
</dbReference>
<dbReference type="SMR" id="Q17DK2"/>
<dbReference type="FunCoup" id="Q17DK2">
    <property type="interactions" value="2118"/>
</dbReference>
<dbReference type="STRING" id="7159.Q17DK2"/>
<dbReference type="PaxDb" id="7159-AAEL004142-PA"/>
<dbReference type="VEuPathDB" id="VectorBase:AAEL004142"/>
<dbReference type="eggNOG" id="KOG2053">
    <property type="taxonomic scope" value="Eukaryota"/>
</dbReference>
<dbReference type="InParanoid" id="Q17DK2"/>
<dbReference type="Proteomes" id="UP000008820">
    <property type="component" value="Unassembled WGS sequence"/>
</dbReference>
<dbReference type="Proteomes" id="UP000682892">
    <property type="component" value="Unassembled WGS sequence"/>
</dbReference>
<dbReference type="GO" id="GO:0005764">
    <property type="term" value="C:lysosome"/>
    <property type="evidence" value="ECO:0000250"/>
    <property type="project" value="UniProtKB"/>
</dbReference>
<dbReference type="GO" id="GO:0031416">
    <property type="term" value="C:NatB complex"/>
    <property type="evidence" value="ECO:0007669"/>
    <property type="project" value="TreeGrafter"/>
</dbReference>
<dbReference type="GO" id="GO:0006955">
    <property type="term" value="P:immune response"/>
    <property type="evidence" value="ECO:0000250"/>
    <property type="project" value="UniProtKB"/>
</dbReference>
<dbReference type="GO" id="GO:0045087">
    <property type="term" value="P:innate immune response"/>
    <property type="evidence" value="ECO:0007669"/>
    <property type="project" value="UniProtKB-KW"/>
</dbReference>
<dbReference type="GO" id="GO:0006911">
    <property type="term" value="P:phagocytosis, engulfment"/>
    <property type="evidence" value="ECO:0000250"/>
    <property type="project" value="UniProtKB"/>
</dbReference>
<dbReference type="FunFam" id="1.25.40.1040:FF:000010">
    <property type="entry name" value="Phagocyte signaling-impaired protein"/>
    <property type="match status" value="1"/>
</dbReference>
<dbReference type="Gene3D" id="1.25.40.1040">
    <property type="match status" value="1"/>
</dbReference>
<dbReference type="InterPro" id="IPR019183">
    <property type="entry name" value="NAA25_NatB_aux_su"/>
</dbReference>
<dbReference type="InterPro" id="IPR011990">
    <property type="entry name" value="TPR-like_helical_dom_sf"/>
</dbReference>
<dbReference type="PANTHER" id="PTHR22767:SF3">
    <property type="entry name" value="N-ALPHA-ACETYLTRANSFERASE 25, NATB AUXILIARY SUBUNIT"/>
    <property type="match status" value="1"/>
</dbReference>
<dbReference type="PANTHER" id="PTHR22767">
    <property type="entry name" value="N-TERMINAL ACETYLTRANSFERASE-RELATED"/>
    <property type="match status" value="1"/>
</dbReference>
<dbReference type="Pfam" id="PF09797">
    <property type="entry name" value="NatB_MDM20"/>
    <property type="match status" value="1"/>
</dbReference>
<dbReference type="SUPFAM" id="SSF48452">
    <property type="entry name" value="TPR-like"/>
    <property type="match status" value="1"/>
</dbReference>
<proteinExistence type="inferred from homology"/>
<accession>Q17DK2</accession>
<protein>
    <recommendedName>
        <fullName>Phagocyte signaling-impaired protein</fullName>
    </recommendedName>
    <alternativeName>
        <fullName>N-terminal acetyltransferase B complex subunit MDM20 homolog</fullName>
    </alternativeName>
    <alternativeName>
        <fullName>N-terminal acetyltransferase B complex subunit NAA25 homolog</fullName>
    </alternativeName>
</protein>
<evidence type="ECO:0000250" key="1"/>
<evidence type="ECO:0000250" key="2">
    <source>
        <dbReference type="UniProtKB" id="Q9VDQ7"/>
    </source>
</evidence>
<evidence type="ECO:0000255" key="3"/>
<evidence type="ECO:0000305" key="4"/>
<evidence type="ECO:0000312" key="5">
    <source>
        <dbReference type="EMBL" id="EAT44499.1"/>
    </source>
</evidence>
<comment type="function">
    <text evidence="1">Non-catalytic subunit of the NatB complex which catalyzes acetylation of the N-terminal methionine residues of proteins beginning with Met-Asp or Met-Glu (By similarity). Has 2 roles in the larval immune response: required both for the phagocytic degradation of internalized bacteria and for the induction of Defensin in the fat body. Within the phagocytic blood cells, has a role in detection of infection and activation of the humoral immune response (By similarity).</text>
</comment>
<comment type="subunit">
    <text evidence="1">Component of the N-terminal acetyltransferase B (NatB) complex.</text>
</comment>
<comment type="subcellular location">
    <subcellularLocation>
        <location evidence="2">Lysosome</location>
    </subcellularLocation>
    <text evidence="2">Blood cell lysosomes.</text>
</comment>
<comment type="similarity">
    <text evidence="4">Belongs to the MDM20/NAA25 family.</text>
</comment>
<comment type="sequence caution" evidence="4">
    <conflict type="erroneous gene model prediction">
        <sequence resource="EMBL-CDS" id="EAT44499"/>
    </conflict>
</comment>
<sequence length="940" mass="108037">MQQLQLHDVWEKLRPRDESIELGHYKKALQDVEKVLKKNPTIQCGRALKAWAFLRLGRDEESAALIKALEQETPTESTTLHVMTLCYKETDQLDKICQIFTSASKQLPGNEELLSQLFIAHMRVNDFKAQQTVAMQLYKLKPRNPFYFWAVTSVMLQALRGPDAKDQQKSSLLLSLAQRMVDKLIADNKIEASQEVQLYLQILQHQEKYQEMLTFLDGPVCTNLYPGAPHSIKIDLLKKLNKWADLNKLMKQLLTEDPDRWDYYQDYILSTIEMIKCKDETPETDHTVDMCHEFIAGIIESQPRKNRGPYLARLELARLMVKHKFDKEQQFGELTELLLDYFRMFGDKTCCANDLKLFLEYVEPAKRPGFAAQLMQECRINPVTLPSSKEHMQRHICSLQIARFCGAHAALSEEHLSALYTALSLHYEHGYNTFGQGLLPTDMGPSDPYALLAVNIMYDRAWKLQRSEPLVEALCLLNHLLSNSINNFHGKLLNLQLYHRLGLVEAAHRAYESLDIKHIQLDSLGYLHCSHLCNGGFPALAKQIFDQTLHFFINDTNSVEFLKTSYNFGSFSKLIEFLDFRDRLSNSLHFTLISVEALLLEMVCFSGTLAQNLAAYRLMRIKPQEDRIKWDEMSDNRDLTIFVHWDPTVEQLREECQKDSFSQEHELLQLRSGLLRLVSSFIELFTKGGDDEYQTAQDLSRHWEELFVTVRAKNRQPACERFLVNLLPSRLHSVLAMPYEAVFRDLASFLLALWKGEKHDQIRSGAERCVKHVNDLFELIAGSIKTYNSSGDLLWNRKKVHDTVNACVEIAALVLFVMTVCFDKYSQAPAPQPTRKTKKKDSEQNNHEPAVVLMTEKNRLQLVVDVLRALKTNLVDCEAVLSSWELPLLSDSLAGALEQMSLGAKSESAVRLKLMDTHLGEIKELKKLLKDKLKLINKSI</sequence>
<keyword id="KW-0929">Antimicrobial</keyword>
<keyword id="KW-0391">Immunity</keyword>
<keyword id="KW-0399">Innate immunity</keyword>
<keyword id="KW-0458">Lysosome</keyword>
<keyword id="KW-1185">Reference proteome</keyword>
<keyword id="KW-0802">TPR repeat</keyword>
<organism>
    <name type="scientific">Aedes aegypti</name>
    <name type="common">Yellowfever mosquito</name>
    <name type="synonym">Culex aegypti</name>
    <dbReference type="NCBI Taxonomy" id="7159"/>
    <lineage>
        <taxon>Eukaryota</taxon>
        <taxon>Metazoa</taxon>
        <taxon>Ecdysozoa</taxon>
        <taxon>Arthropoda</taxon>
        <taxon>Hexapoda</taxon>
        <taxon>Insecta</taxon>
        <taxon>Pterygota</taxon>
        <taxon>Neoptera</taxon>
        <taxon>Endopterygota</taxon>
        <taxon>Diptera</taxon>
        <taxon>Nematocera</taxon>
        <taxon>Culicoidea</taxon>
        <taxon>Culicidae</taxon>
        <taxon>Culicinae</taxon>
        <taxon>Aedini</taxon>
        <taxon>Aedes</taxon>
        <taxon>Stegomyia</taxon>
    </lineage>
</organism>
<gene>
    <name evidence="2" type="primary">psidin</name>
    <name type="ORF">AAEL004142</name>
</gene>
<reference evidence="5" key="1">
    <citation type="journal article" date="2007" name="Science">
        <title>Genome sequence of Aedes aegypti, a major arbovirus vector.</title>
        <authorList>
            <person name="Nene V."/>
            <person name="Wortman J.R."/>
            <person name="Lawson D."/>
            <person name="Haas B.J."/>
            <person name="Kodira C.D."/>
            <person name="Tu Z.J."/>
            <person name="Loftus B.J."/>
            <person name="Xi Z."/>
            <person name="Megy K."/>
            <person name="Grabherr M."/>
            <person name="Ren Q."/>
            <person name="Zdobnov E.M."/>
            <person name="Lobo N.F."/>
            <person name="Campbell K.S."/>
            <person name="Brown S.E."/>
            <person name="Bonaldo M.F."/>
            <person name="Zhu J."/>
            <person name="Sinkins S.P."/>
            <person name="Hogenkamp D.G."/>
            <person name="Amedeo P."/>
            <person name="Arensburger P."/>
            <person name="Atkinson P.W."/>
            <person name="Bidwell S.L."/>
            <person name="Biedler J."/>
            <person name="Birney E."/>
            <person name="Bruggner R.V."/>
            <person name="Costas J."/>
            <person name="Coy M.R."/>
            <person name="Crabtree J."/>
            <person name="Crawford M."/>
            <person name="DeBruyn B."/>
            <person name="DeCaprio D."/>
            <person name="Eiglmeier K."/>
            <person name="Eisenstadt E."/>
            <person name="El-Dorry H."/>
            <person name="Gelbart W.M."/>
            <person name="Gomes S.L."/>
            <person name="Hammond M."/>
            <person name="Hannick L.I."/>
            <person name="Hogan J.R."/>
            <person name="Holmes M.H."/>
            <person name="Jaffe D."/>
            <person name="Johnston S.J."/>
            <person name="Kennedy R.C."/>
            <person name="Koo H."/>
            <person name="Kravitz S."/>
            <person name="Kriventseva E.V."/>
            <person name="Kulp D."/>
            <person name="Labutti K."/>
            <person name="Lee E."/>
            <person name="Li S."/>
            <person name="Lovin D.D."/>
            <person name="Mao C."/>
            <person name="Mauceli E."/>
            <person name="Menck C.F."/>
            <person name="Miller J.R."/>
            <person name="Montgomery P."/>
            <person name="Mori A."/>
            <person name="Nascimento A.L."/>
            <person name="Naveira H.F."/>
            <person name="Nusbaum C."/>
            <person name="O'Leary S.B."/>
            <person name="Orvis J."/>
            <person name="Pertea M."/>
            <person name="Quesneville H."/>
            <person name="Reidenbach K.R."/>
            <person name="Rogers Y.-H.C."/>
            <person name="Roth C.W."/>
            <person name="Schneider J.R."/>
            <person name="Schatz M."/>
            <person name="Shumway M."/>
            <person name="Stanke M."/>
            <person name="Stinson E.O."/>
            <person name="Tubio J.M.C."/>
            <person name="Vanzee J.P."/>
            <person name="Verjovski-Almeida S."/>
            <person name="Werner D."/>
            <person name="White O.R."/>
            <person name="Wyder S."/>
            <person name="Zeng Q."/>
            <person name="Zhao Q."/>
            <person name="Zhao Y."/>
            <person name="Hill C.A."/>
            <person name="Raikhel A.S."/>
            <person name="Soares M.B."/>
            <person name="Knudson D.L."/>
            <person name="Lee N.H."/>
            <person name="Galagan J."/>
            <person name="Salzberg S.L."/>
            <person name="Paulsen I.T."/>
            <person name="Dimopoulos G."/>
            <person name="Collins F.H."/>
            <person name="Bruce B."/>
            <person name="Fraser-Liggett C.M."/>
            <person name="Severson D.W."/>
        </authorList>
    </citation>
    <scope>NUCLEOTIDE SEQUENCE [LARGE SCALE GENOMIC DNA]</scope>
    <source>
        <strain>LVPib12</strain>
    </source>
</reference>
<feature type="chain" id="PRO_0000314623" description="Phagocyte signaling-impaired protein">
    <location>
        <begin position="1"/>
        <end position="940"/>
    </location>
</feature>
<feature type="repeat" description="TPR" evidence="3">
    <location>
        <begin position="77"/>
        <end position="110"/>
    </location>
</feature>